<accession>O83274</accession>
<organism>
    <name type="scientific">Treponema pallidum (strain Nichols)</name>
    <dbReference type="NCBI Taxonomy" id="243276"/>
    <lineage>
        <taxon>Bacteria</taxon>
        <taxon>Pseudomonadati</taxon>
        <taxon>Spirochaetota</taxon>
        <taxon>Spirochaetia</taxon>
        <taxon>Spirochaetales</taxon>
        <taxon>Treponemataceae</taxon>
        <taxon>Treponema</taxon>
    </lineage>
</organism>
<reference key="1">
    <citation type="journal article" date="1998" name="Science">
        <title>Complete genome sequence of Treponema pallidum, the syphilis spirochete.</title>
        <authorList>
            <person name="Fraser C.M."/>
            <person name="Norris S.J."/>
            <person name="Weinstock G.M."/>
            <person name="White O."/>
            <person name="Sutton G.G."/>
            <person name="Dodson R.J."/>
            <person name="Gwinn M.L."/>
            <person name="Hickey E.K."/>
            <person name="Clayton R.A."/>
            <person name="Ketchum K.A."/>
            <person name="Sodergren E."/>
            <person name="Hardham J.M."/>
            <person name="McLeod M.P."/>
            <person name="Salzberg S.L."/>
            <person name="Peterson J.D."/>
            <person name="Khalak H.G."/>
            <person name="Richardson D.L."/>
            <person name="Howell J.K."/>
            <person name="Chidambaram M."/>
            <person name="Utterback T.R."/>
            <person name="McDonald L.A."/>
            <person name="Artiach P."/>
            <person name="Bowman C."/>
            <person name="Cotton M.D."/>
            <person name="Fujii C."/>
            <person name="Garland S.A."/>
            <person name="Hatch B."/>
            <person name="Horst K."/>
            <person name="Roberts K.M."/>
            <person name="Sandusky M."/>
            <person name="Weidman J.F."/>
            <person name="Smith H.O."/>
            <person name="Venter J.C."/>
        </authorList>
    </citation>
    <scope>NUCLEOTIDE SEQUENCE [LARGE SCALE GENOMIC DNA]</scope>
    <source>
        <strain>Nichols</strain>
    </source>
</reference>
<proteinExistence type="predicted"/>
<evidence type="ECO:0000255" key="1">
    <source>
        <dbReference type="PROSITE-ProRule" id="PRU00219"/>
    </source>
</evidence>
<name>Y246_TREPA</name>
<sequence>MVGVPLQWFLKDDFDGKEILWNLFRELVYYRELKADYAYYCNRVSFFEDAAQGMRRLMYEAVFSREARDEIRVRAFVQHYCHTEVASLFYLFDAVYAFHYVRNRAPYYTTPEGSALLASLYQKERGVYWEHTETALHLQFAYALAERVLFHDMPKGCNRACIARDPVVQEVLRTLVLGTEMSNFIHSEFFPLSGEVVPTKHRDRIVSVFLLEHFVRLWHLSVANITFELKNITDRSYDPFRNERAFEYTKSNLHAVHSRDGQQELKKREDVFESCTTQFDERFSISPKERKEFARLLRTTHRLRIDMRSFWKSLIGKSVQWIDCYEGKCPKGRLNVGDFVSVFPDFQEFRGRDQRYKLRVYDRVYEVRACTLRPAQIEVSFVVDNSGSMNKEKIASAREALAVSMLSLKDFGEYSDMLAAGRRERTTIHSEVYYFGSSFIKVKSFGKSKSKDFNSAQLIKASVNLDGRFGGTNDAEVLKHILADVERRRARVSSDTSFVKVVLVITDGCSSYPHESRRTIEELRRRGVMIFGFQIGLMSPEETALFHDVWNSTEELGLLLGERLEYLPRELLRTLRVVLSKVHRLSSGERLHAQRVW</sequence>
<dbReference type="EMBL" id="AE000520">
    <property type="protein sequence ID" value="AAC65240.1"/>
    <property type="molecule type" value="Genomic_DNA"/>
</dbReference>
<dbReference type="PIR" id="A71348">
    <property type="entry name" value="A71348"/>
</dbReference>
<dbReference type="STRING" id="243276.TP_0246"/>
<dbReference type="EnsemblBacteria" id="AAC65240">
    <property type="protein sequence ID" value="AAC65240"/>
    <property type="gene ID" value="TP_0246"/>
</dbReference>
<dbReference type="KEGG" id="tpa:TP_0246"/>
<dbReference type="KEGG" id="tpw:TPANIC_0246"/>
<dbReference type="eggNOG" id="COG2304">
    <property type="taxonomic scope" value="Bacteria"/>
</dbReference>
<dbReference type="HOGENOM" id="CLU_423186_0_0_12"/>
<dbReference type="Proteomes" id="UP000000811">
    <property type="component" value="Chromosome"/>
</dbReference>
<dbReference type="CDD" id="cd00198">
    <property type="entry name" value="vWFA"/>
    <property type="match status" value="1"/>
</dbReference>
<dbReference type="Gene3D" id="3.40.50.410">
    <property type="entry name" value="von Willebrand factor, type A domain"/>
    <property type="match status" value="1"/>
</dbReference>
<dbReference type="InterPro" id="IPR002035">
    <property type="entry name" value="VWF_A"/>
</dbReference>
<dbReference type="InterPro" id="IPR036465">
    <property type="entry name" value="vWFA_dom_sf"/>
</dbReference>
<dbReference type="Pfam" id="PF00092">
    <property type="entry name" value="VWA"/>
    <property type="match status" value="1"/>
</dbReference>
<dbReference type="SMART" id="SM00327">
    <property type="entry name" value="VWA"/>
    <property type="match status" value="1"/>
</dbReference>
<dbReference type="SUPFAM" id="SSF53300">
    <property type="entry name" value="vWA-like"/>
    <property type="match status" value="1"/>
</dbReference>
<dbReference type="PROSITE" id="PS50234">
    <property type="entry name" value="VWFA"/>
    <property type="match status" value="1"/>
</dbReference>
<protein>
    <recommendedName>
        <fullName>Uncharacterized protein TP_0246</fullName>
    </recommendedName>
</protein>
<keyword id="KW-1185">Reference proteome</keyword>
<gene>
    <name type="ordered locus">TP_0246</name>
</gene>
<feature type="chain" id="PRO_0000202218" description="Uncharacterized protein TP_0246">
    <location>
        <begin position="1"/>
        <end position="597"/>
    </location>
</feature>
<feature type="domain" description="VWFA" evidence="1">
    <location>
        <begin position="378"/>
        <end position="575"/>
    </location>
</feature>